<protein>
    <recommendedName>
        <fullName>Protein HydE</fullName>
    </recommendedName>
</protein>
<sequence>MWLNFIFRRTAPVPFLESILIKEAKKESLRFQRSLFDSFSYGFVVGGERESLLRFSENLSKNLPLSLFFFFIKVEPLEGEPPSLETLAENPAQGVMDFTPLEMEAFLPKEGERSLRSLPWRVSFQLKGEKRENLEGEALYEAFEALAKKVLEGESILITTRRGLYQLSLKGTKKTQKGENKPLFMPLDVASAELLFRVCEPELNALATWEKPRIELAPKGVFLDRFEGALYPESGVEVLLPYDLPLMILSHFLRAHEVEMVVLERALEGEGEGLFYENSEPLESLKVCVSDDSTVLVTDRERGGLIPDYSTLISKLLEENHLHEGALALHLSHHAPSYFWLIQGEARRSVMRFELPLNPALLWQEIAQSGETGESLTQNFSREFPGLAKRIQNSQAQGVSENLNDWVGMAGFFLGLQEEWNPKGAQEALWSKAKAFLGAKGPRVDFPLKKEESGRVGLDATRVIRSCMSFKLAGIDDETLAFGVIDSLAEFWGNLLRDMSENFAQERVILSGSLLSNRAFLNKILQYTPKHLQLHFPLQTPLDFVS</sequence>
<accession>P31877</accession>
<accession>Q9R870</accession>
<keyword id="KW-1185">Reference proteome</keyword>
<gene>
    <name type="primary">hydE</name>
    <name type="ordered locus">WS1683</name>
</gene>
<feature type="chain" id="PRO_0000084106" description="Protein HydE">
    <location>
        <begin position="1"/>
        <end position="546"/>
    </location>
</feature>
<dbReference type="EMBL" id="AJ003049">
    <property type="protein sequence ID" value="CAA05821.1"/>
    <property type="molecule type" value="Genomic_DNA"/>
</dbReference>
<dbReference type="EMBL" id="BX571661">
    <property type="protein sequence ID" value="CAE10710.1"/>
    <property type="molecule type" value="Genomic_DNA"/>
</dbReference>
<dbReference type="EMBL" id="X65189">
    <property type="protein sequence ID" value="CAA46306.1"/>
    <property type="molecule type" value="Genomic_DNA"/>
</dbReference>
<dbReference type="PIR" id="S22408">
    <property type="entry name" value="S22408"/>
</dbReference>
<dbReference type="RefSeq" id="WP_011139494.1">
    <property type="nucleotide sequence ID" value="NC_005090.1"/>
</dbReference>
<dbReference type="STRING" id="273121.WS1683"/>
<dbReference type="KEGG" id="wsu:WS1683"/>
<dbReference type="eggNOG" id="COG0068">
    <property type="taxonomic scope" value="Bacteria"/>
</dbReference>
<dbReference type="HOGENOM" id="CLU_033228_0_0_7"/>
<dbReference type="Proteomes" id="UP000000422">
    <property type="component" value="Chromosome"/>
</dbReference>
<dbReference type="Gene3D" id="3.30.420.40">
    <property type="match status" value="1"/>
</dbReference>
<reference key="1">
    <citation type="journal article" date="1998" name="Arch. Microbiol.">
        <title>Two membrane anchors of Wolinella succinogenes hydrogenase and their function in fumarate and polysulfide respiration.</title>
        <authorList>
            <person name="Gross R."/>
            <person name="Simon J."/>
            <person name="Theis F."/>
            <person name="Kroeger A."/>
        </authorList>
    </citation>
    <scope>NUCLEOTIDE SEQUENCE [GENOMIC DNA]</scope>
    <source>
        <strain>ATCC 29543 / DSM 1740 / CCUG 13145 / JCM 31913 / LMG 7466 / NCTC 11488 / FDC 602W</strain>
    </source>
</reference>
<reference key="2">
    <citation type="journal article" date="2003" name="Proc. Natl. Acad. Sci. U.S.A.">
        <title>Complete genome sequence and analysis of Wolinella succinogenes.</title>
        <authorList>
            <person name="Baar C."/>
            <person name="Eppinger M."/>
            <person name="Raddatz G."/>
            <person name="Simon J."/>
            <person name="Lanz C."/>
            <person name="Klimmek O."/>
            <person name="Nandakumar R."/>
            <person name="Gross R."/>
            <person name="Rosinus A."/>
            <person name="Keller H."/>
            <person name="Jagtap P."/>
            <person name="Linke B."/>
            <person name="Meyer F."/>
            <person name="Lederer H."/>
            <person name="Schuster S.C."/>
        </authorList>
    </citation>
    <scope>NUCLEOTIDE SEQUENCE [LARGE SCALE GENOMIC DNA]</scope>
    <source>
        <strain>ATCC 29543 / DSM 1740 / CCUG 13145 / JCM 31913 / LMG 7466 / NCTC 11488 / FDC 602W</strain>
    </source>
</reference>
<reference key="3">
    <citation type="journal article" date="1992" name="Eur. J. Biochem.">
        <title>The quinone-reactive Ni/Fe-hydrogenase of Wolinella succinogenes.</title>
        <authorList>
            <person name="Dross F."/>
            <person name="Geisler V."/>
            <person name="Lenger R."/>
            <person name="Theis F."/>
            <person name="Krafft T."/>
            <person name="Fahrenholz F."/>
            <person name="Kojro E."/>
            <person name="Duchene A."/>
            <person name="Tripier D."/>
            <person name="Juvenal K."/>
            <person name="Kroeger A."/>
        </authorList>
    </citation>
    <scope>NUCLEOTIDE SEQUENCE [GENOMIC DNA] OF 1-80</scope>
</reference>
<proteinExistence type="predicted"/>
<name>HYDE_WOLSU</name>
<organism>
    <name type="scientific">Wolinella succinogenes (strain ATCC 29543 / DSM 1740 / CCUG 13145 / JCM 31913 / LMG 7466 / NCTC 11488 / FDC 602W)</name>
    <name type="common">Vibrio succinogenes</name>
    <dbReference type="NCBI Taxonomy" id="273121"/>
    <lineage>
        <taxon>Bacteria</taxon>
        <taxon>Pseudomonadati</taxon>
        <taxon>Campylobacterota</taxon>
        <taxon>Epsilonproteobacteria</taxon>
        <taxon>Campylobacterales</taxon>
        <taxon>Helicobacteraceae</taxon>
        <taxon>Wolinella</taxon>
    </lineage>
</organism>